<gene>
    <name evidence="1" type="primary">coaE</name>
    <name type="ordered locus">Nwi_0104</name>
</gene>
<protein>
    <recommendedName>
        <fullName evidence="1">Dephospho-CoA kinase</fullName>
        <ecNumber evidence="1">2.7.1.24</ecNumber>
    </recommendedName>
    <alternativeName>
        <fullName evidence="1">Dephosphocoenzyme A kinase</fullName>
    </alternativeName>
</protein>
<organism>
    <name type="scientific">Nitrobacter winogradskyi (strain ATCC 25391 / DSM 10237 / CIP 104748 / NCIMB 11846 / Nb-255)</name>
    <dbReference type="NCBI Taxonomy" id="323098"/>
    <lineage>
        <taxon>Bacteria</taxon>
        <taxon>Pseudomonadati</taxon>
        <taxon>Pseudomonadota</taxon>
        <taxon>Alphaproteobacteria</taxon>
        <taxon>Hyphomicrobiales</taxon>
        <taxon>Nitrobacteraceae</taxon>
        <taxon>Nitrobacter</taxon>
    </lineage>
</organism>
<keyword id="KW-0067">ATP-binding</keyword>
<keyword id="KW-0173">Coenzyme A biosynthesis</keyword>
<keyword id="KW-0963">Cytoplasm</keyword>
<keyword id="KW-0418">Kinase</keyword>
<keyword id="KW-0547">Nucleotide-binding</keyword>
<keyword id="KW-1185">Reference proteome</keyword>
<keyword id="KW-0808">Transferase</keyword>
<reference key="1">
    <citation type="journal article" date="2006" name="Appl. Environ. Microbiol.">
        <title>Genome sequence of the chemolithoautotrophic nitrite-oxidizing bacterium Nitrobacter winogradskyi Nb-255.</title>
        <authorList>
            <person name="Starkenburg S.R."/>
            <person name="Chain P.S.G."/>
            <person name="Sayavedra-Soto L.A."/>
            <person name="Hauser L."/>
            <person name="Land M.L."/>
            <person name="Larimer F.W."/>
            <person name="Malfatti S.A."/>
            <person name="Klotz M.G."/>
            <person name="Bottomley P.J."/>
            <person name="Arp D.J."/>
            <person name="Hickey W.J."/>
        </authorList>
    </citation>
    <scope>NUCLEOTIDE SEQUENCE [LARGE SCALE GENOMIC DNA]</scope>
    <source>
        <strain>ATCC 25391 / DSM 10237 / CIP 104748 / NCIMB 11846 / Nb-255</strain>
    </source>
</reference>
<sequence length="199" mass="21613">MLVIGLTGSIGMGKSTTARLFSEAGVPVYDADATVHAIYEGEAAFLVEAAFPGTTVNGKVDREKLSAKVVHDAAAMKRLEQIVHPLLYDYRQAFLQQAERSGAAVAVIDVPLLFETGGERSVDAVVVVTTTPEIQRERILARGNMTSEKLKAIQARQLPDAEKRKRADFVVDTSHGVDAVRTQIREILAAAAKMPRRRS</sequence>
<comment type="function">
    <text evidence="1">Catalyzes the phosphorylation of the 3'-hydroxyl group of dephosphocoenzyme A to form coenzyme A.</text>
</comment>
<comment type="catalytic activity">
    <reaction evidence="1">
        <text>3'-dephospho-CoA + ATP = ADP + CoA + H(+)</text>
        <dbReference type="Rhea" id="RHEA:18245"/>
        <dbReference type="ChEBI" id="CHEBI:15378"/>
        <dbReference type="ChEBI" id="CHEBI:30616"/>
        <dbReference type="ChEBI" id="CHEBI:57287"/>
        <dbReference type="ChEBI" id="CHEBI:57328"/>
        <dbReference type="ChEBI" id="CHEBI:456216"/>
        <dbReference type="EC" id="2.7.1.24"/>
    </reaction>
</comment>
<comment type="pathway">
    <text evidence="1">Cofactor biosynthesis; coenzyme A biosynthesis; CoA from (R)-pantothenate: step 5/5.</text>
</comment>
<comment type="subcellular location">
    <subcellularLocation>
        <location evidence="1">Cytoplasm</location>
    </subcellularLocation>
</comment>
<comment type="similarity">
    <text evidence="1">Belongs to the CoaE family.</text>
</comment>
<feature type="chain" id="PRO_0000243308" description="Dephospho-CoA kinase">
    <location>
        <begin position="1"/>
        <end position="199"/>
    </location>
</feature>
<feature type="domain" description="DPCK" evidence="1">
    <location>
        <begin position="3"/>
        <end position="199"/>
    </location>
</feature>
<feature type="binding site" evidence="1">
    <location>
        <begin position="11"/>
        <end position="16"/>
    </location>
    <ligand>
        <name>ATP</name>
        <dbReference type="ChEBI" id="CHEBI:30616"/>
    </ligand>
</feature>
<evidence type="ECO:0000255" key="1">
    <source>
        <dbReference type="HAMAP-Rule" id="MF_00376"/>
    </source>
</evidence>
<proteinExistence type="inferred from homology"/>
<dbReference type="EC" id="2.7.1.24" evidence="1"/>
<dbReference type="EMBL" id="CP000115">
    <property type="protein sequence ID" value="ABA03372.1"/>
    <property type="molecule type" value="Genomic_DNA"/>
</dbReference>
<dbReference type="RefSeq" id="WP_011313441.1">
    <property type="nucleotide sequence ID" value="NC_007406.1"/>
</dbReference>
<dbReference type="SMR" id="Q3SWG9"/>
<dbReference type="STRING" id="323098.Nwi_0104"/>
<dbReference type="KEGG" id="nwi:Nwi_0104"/>
<dbReference type="eggNOG" id="COG0237">
    <property type="taxonomic scope" value="Bacteria"/>
</dbReference>
<dbReference type="HOGENOM" id="CLU_057180_3_0_5"/>
<dbReference type="OrthoDB" id="9812943at2"/>
<dbReference type="UniPathway" id="UPA00241">
    <property type="reaction ID" value="UER00356"/>
</dbReference>
<dbReference type="Proteomes" id="UP000002531">
    <property type="component" value="Chromosome"/>
</dbReference>
<dbReference type="GO" id="GO:0005737">
    <property type="term" value="C:cytoplasm"/>
    <property type="evidence" value="ECO:0007669"/>
    <property type="project" value="UniProtKB-SubCell"/>
</dbReference>
<dbReference type="GO" id="GO:0005524">
    <property type="term" value="F:ATP binding"/>
    <property type="evidence" value="ECO:0007669"/>
    <property type="project" value="UniProtKB-UniRule"/>
</dbReference>
<dbReference type="GO" id="GO:0004140">
    <property type="term" value="F:dephospho-CoA kinase activity"/>
    <property type="evidence" value="ECO:0007669"/>
    <property type="project" value="UniProtKB-UniRule"/>
</dbReference>
<dbReference type="GO" id="GO:0015937">
    <property type="term" value="P:coenzyme A biosynthetic process"/>
    <property type="evidence" value="ECO:0007669"/>
    <property type="project" value="UniProtKB-UniRule"/>
</dbReference>
<dbReference type="CDD" id="cd02022">
    <property type="entry name" value="DPCK"/>
    <property type="match status" value="1"/>
</dbReference>
<dbReference type="Gene3D" id="3.40.50.300">
    <property type="entry name" value="P-loop containing nucleotide triphosphate hydrolases"/>
    <property type="match status" value="1"/>
</dbReference>
<dbReference type="HAMAP" id="MF_00376">
    <property type="entry name" value="Dephospho_CoA_kinase"/>
    <property type="match status" value="1"/>
</dbReference>
<dbReference type="InterPro" id="IPR001977">
    <property type="entry name" value="Depp_CoAkinase"/>
</dbReference>
<dbReference type="InterPro" id="IPR027417">
    <property type="entry name" value="P-loop_NTPase"/>
</dbReference>
<dbReference type="NCBIfam" id="TIGR00152">
    <property type="entry name" value="dephospho-CoA kinase"/>
    <property type="match status" value="1"/>
</dbReference>
<dbReference type="PANTHER" id="PTHR10695:SF46">
    <property type="entry name" value="BIFUNCTIONAL COENZYME A SYNTHASE-RELATED"/>
    <property type="match status" value="1"/>
</dbReference>
<dbReference type="PANTHER" id="PTHR10695">
    <property type="entry name" value="DEPHOSPHO-COA KINASE-RELATED"/>
    <property type="match status" value="1"/>
</dbReference>
<dbReference type="Pfam" id="PF01121">
    <property type="entry name" value="CoaE"/>
    <property type="match status" value="1"/>
</dbReference>
<dbReference type="SUPFAM" id="SSF52540">
    <property type="entry name" value="P-loop containing nucleoside triphosphate hydrolases"/>
    <property type="match status" value="1"/>
</dbReference>
<dbReference type="PROSITE" id="PS51219">
    <property type="entry name" value="DPCK"/>
    <property type="match status" value="1"/>
</dbReference>
<name>COAE_NITWN</name>
<accession>Q3SWG9</accession>